<name>YL283_YEAST</name>
<feature type="transit peptide" description="Mitochondrion" evidence="1">
    <location>
        <begin position="1"/>
        <end position="29"/>
    </location>
</feature>
<feature type="chain" id="PRO_0000247160" description="Uncharacterized protein YLR283W, mitochondrial">
    <location>
        <begin position="30"/>
        <end position="314"/>
    </location>
</feature>
<feature type="transmembrane region" description="Helical" evidence="1">
    <location>
        <begin position="262"/>
        <end position="279"/>
    </location>
</feature>
<feature type="region of interest" description="Disordered" evidence="2">
    <location>
        <begin position="52"/>
        <end position="74"/>
    </location>
</feature>
<feature type="region of interest" description="Disordered" evidence="2">
    <location>
        <begin position="281"/>
        <end position="314"/>
    </location>
</feature>
<feature type="coiled-coil region" evidence="1">
    <location>
        <begin position="177"/>
        <end position="207"/>
    </location>
</feature>
<feature type="compositionally biased region" description="Basic and acidic residues" evidence="2">
    <location>
        <begin position="58"/>
        <end position="74"/>
    </location>
</feature>
<accession>Q05867</accession>
<accession>D6VYS7</accession>
<reference key="1">
    <citation type="journal article" date="1997" name="Nature">
        <title>The nucleotide sequence of Saccharomyces cerevisiae chromosome XII.</title>
        <authorList>
            <person name="Johnston M."/>
            <person name="Hillier L.W."/>
            <person name="Riles L."/>
            <person name="Albermann K."/>
            <person name="Andre B."/>
            <person name="Ansorge W."/>
            <person name="Benes V."/>
            <person name="Brueckner M."/>
            <person name="Delius H."/>
            <person name="Dubois E."/>
            <person name="Duesterhoeft A."/>
            <person name="Entian K.-D."/>
            <person name="Floeth M."/>
            <person name="Goffeau A."/>
            <person name="Hebling U."/>
            <person name="Heumann K."/>
            <person name="Heuss-Neitzel D."/>
            <person name="Hilbert H."/>
            <person name="Hilger F."/>
            <person name="Kleine K."/>
            <person name="Koetter P."/>
            <person name="Louis E.J."/>
            <person name="Messenguy F."/>
            <person name="Mewes H.-W."/>
            <person name="Miosga T."/>
            <person name="Moestl D."/>
            <person name="Mueller-Auer S."/>
            <person name="Nentwich U."/>
            <person name="Obermaier B."/>
            <person name="Piravandi E."/>
            <person name="Pohl T.M."/>
            <person name="Portetelle D."/>
            <person name="Purnelle B."/>
            <person name="Rechmann S."/>
            <person name="Rieger M."/>
            <person name="Rinke M."/>
            <person name="Rose M."/>
            <person name="Scharfe M."/>
            <person name="Scherens B."/>
            <person name="Scholler P."/>
            <person name="Schwager C."/>
            <person name="Schwarz S."/>
            <person name="Underwood A.P."/>
            <person name="Urrestarazu L.A."/>
            <person name="Vandenbol M."/>
            <person name="Verhasselt P."/>
            <person name="Vierendeels F."/>
            <person name="Voet M."/>
            <person name="Volckaert G."/>
            <person name="Voss H."/>
            <person name="Wambutt R."/>
            <person name="Wedler E."/>
            <person name="Wedler H."/>
            <person name="Zimmermann F.K."/>
            <person name="Zollner A."/>
            <person name="Hani J."/>
            <person name="Hoheisel J.D."/>
        </authorList>
    </citation>
    <scope>NUCLEOTIDE SEQUENCE [LARGE SCALE GENOMIC DNA]</scope>
    <source>
        <strain>ATCC 204508 / S288c</strain>
    </source>
</reference>
<reference key="2">
    <citation type="journal article" date="2014" name="G3 (Bethesda)">
        <title>The reference genome sequence of Saccharomyces cerevisiae: Then and now.</title>
        <authorList>
            <person name="Engel S.R."/>
            <person name="Dietrich F.S."/>
            <person name="Fisk D.G."/>
            <person name="Binkley G."/>
            <person name="Balakrishnan R."/>
            <person name="Costanzo M.C."/>
            <person name="Dwight S.S."/>
            <person name="Hitz B.C."/>
            <person name="Karra K."/>
            <person name="Nash R.S."/>
            <person name="Weng S."/>
            <person name="Wong E.D."/>
            <person name="Lloyd P."/>
            <person name="Skrzypek M.S."/>
            <person name="Miyasato S.R."/>
            <person name="Simison M."/>
            <person name="Cherry J.M."/>
        </authorList>
    </citation>
    <scope>GENOME REANNOTATION</scope>
    <source>
        <strain>ATCC 204508 / S288c</strain>
    </source>
</reference>
<reference key="3">
    <citation type="journal article" date="2007" name="Genome Res.">
        <title>Approaching a complete repository of sequence-verified protein-encoding clones for Saccharomyces cerevisiae.</title>
        <authorList>
            <person name="Hu Y."/>
            <person name="Rolfs A."/>
            <person name="Bhullar B."/>
            <person name="Murthy T.V.S."/>
            <person name="Zhu C."/>
            <person name="Berger M.F."/>
            <person name="Camargo A.A."/>
            <person name="Kelley F."/>
            <person name="McCarron S."/>
            <person name="Jepson D."/>
            <person name="Richardson A."/>
            <person name="Raphael J."/>
            <person name="Moreira D."/>
            <person name="Taycher E."/>
            <person name="Zuo D."/>
            <person name="Mohr S."/>
            <person name="Kane M.F."/>
            <person name="Williamson J."/>
            <person name="Simpson A.J.G."/>
            <person name="Bulyk M.L."/>
            <person name="Harlow E."/>
            <person name="Marsischky G."/>
            <person name="Kolodner R.D."/>
            <person name="LaBaer J."/>
        </authorList>
    </citation>
    <scope>NUCLEOTIDE SEQUENCE [GENOMIC DNA]</scope>
    <source>
        <strain>ATCC 204508 / S288c</strain>
    </source>
</reference>
<reference key="4">
    <citation type="journal article" date="2003" name="Nature">
        <title>Global analysis of protein localization in budding yeast.</title>
        <authorList>
            <person name="Huh W.-K."/>
            <person name="Falvo J.V."/>
            <person name="Gerke L.C."/>
            <person name="Carroll A.S."/>
            <person name="Howson R.W."/>
            <person name="Weissman J.S."/>
            <person name="O'Shea E.K."/>
        </authorList>
    </citation>
    <scope>SUBCELLULAR LOCATION [LARGE SCALE ANALYSIS]</scope>
</reference>
<organism>
    <name type="scientific">Saccharomyces cerevisiae (strain ATCC 204508 / S288c)</name>
    <name type="common">Baker's yeast</name>
    <dbReference type="NCBI Taxonomy" id="559292"/>
    <lineage>
        <taxon>Eukaryota</taxon>
        <taxon>Fungi</taxon>
        <taxon>Dikarya</taxon>
        <taxon>Ascomycota</taxon>
        <taxon>Saccharomycotina</taxon>
        <taxon>Saccharomycetes</taxon>
        <taxon>Saccharomycetales</taxon>
        <taxon>Saccharomycetaceae</taxon>
        <taxon>Saccharomyces</taxon>
    </lineage>
</organism>
<gene>
    <name type="ordered locus">YLR283W</name>
</gene>
<dbReference type="EMBL" id="U17243">
    <property type="protein sequence ID" value="AAB67328.1"/>
    <property type="molecule type" value="Genomic_DNA"/>
</dbReference>
<dbReference type="EMBL" id="AY692566">
    <property type="protein sequence ID" value="AAT92585.1"/>
    <property type="molecule type" value="Genomic_DNA"/>
</dbReference>
<dbReference type="EMBL" id="BK006945">
    <property type="protein sequence ID" value="DAA09593.1"/>
    <property type="molecule type" value="Genomic_DNA"/>
</dbReference>
<dbReference type="PIR" id="S50368">
    <property type="entry name" value="S50368"/>
</dbReference>
<dbReference type="SMR" id="Q05867"/>
<dbReference type="BioGRID" id="31548">
    <property type="interactions" value="56"/>
</dbReference>
<dbReference type="DIP" id="DIP-5078N"/>
<dbReference type="FunCoup" id="Q05867">
    <property type="interactions" value="2"/>
</dbReference>
<dbReference type="IntAct" id="Q05867">
    <property type="interactions" value="3"/>
</dbReference>
<dbReference type="STRING" id="4932.YLR283W"/>
<dbReference type="iPTMnet" id="Q05867"/>
<dbReference type="PaxDb" id="4932-YLR283W"/>
<dbReference type="PeptideAtlas" id="Q05867"/>
<dbReference type="EnsemblFungi" id="YLR283W_mRNA">
    <property type="protein sequence ID" value="YLR283W"/>
    <property type="gene ID" value="YLR283W"/>
</dbReference>
<dbReference type="KEGG" id="sce:YLR283W"/>
<dbReference type="AGR" id="SGD:S000004273"/>
<dbReference type="SGD" id="S000004273">
    <property type="gene designation" value="YLR283W"/>
</dbReference>
<dbReference type="VEuPathDB" id="FungiDB:YLR283W"/>
<dbReference type="eggNOG" id="ENOG502RBZK">
    <property type="taxonomic scope" value="Eukaryota"/>
</dbReference>
<dbReference type="HOGENOM" id="CLU_062868_1_0_1"/>
<dbReference type="InParanoid" id="Q05867"/>
<dbReference type="OMA" id="PQDQHDI"/>
<dbReference type="OrthoDB" id="5424147at2759"/>
<dbReference type="BioCyc" id="YEAST:G3O-32379-MONOMER"/>
<dbReference type="BioGRID-ORCS" id="850988">
    <property type="hits" value="0 hits in 10 CRISPR screens"/>
</dbReference>
<dbReference type="PRO" id="PR:Q05867"/>
<dbReference type="Proteomes" id="UP000002311">
    <property type="component" value="Chromosome XII"/>
</dbReference>
<dbReference type="RNAct" id="Q05867">
    <property type="molecule type" value="protein"/>
</dbReference>
<dbReference type="GO" id="GO:0005783">
    <property type="term" value="C:endoplasmic reticulum"/>
    <property type="evidence" value="ECO:0007005"/>
    <property type="project" value="SGD"/>
</dbReference>
<dbReference type="GO" id="GO:0005743">
    <property type="term" value="C:mitochondrial inner membrane"/>
    <property type="evidence" value="ECO:0000314"/>
    <property type="project" value="SGD"/>
</dbReference>
<dbReference type="GO" id="GO:0005739">
    <property type="term" value="C:mitochondrion"/>
    <property type="evidence" value="ECO:0007005"/>
    <property type="project" value="SGD"/>
</dbReference>
<dbReference type="GO" id="GO:2000214">
    <property type="term" value="P:regulation of proline metabolic process"/>
    <property type="evidence" value="ECO:0000315"/>
    <property type="project" value="SGD"/>
</dbReference>
<dbReference type="InterPro" id="IPR024461">
    <property type="entry name" value="CCDC90-like"/>
</dbReference>
<dbReference type="PANTHER" id="PTHR14360:SF12">
    <property type="entry name" value="MOZ PROTEIN REPRESENTS A CHROMATIN-ASSOCIATED ACETYLTRANSFERASE"/>
    <property type="match status" value="1"/>
</dbReference>
<dbReference type="PANTHER" id="PTHR14360">
    <property type="entry name" value="PROTEIN FMP32, MITOCHONDRIAL"/>
    <property type="match status" value="1"/>
</dbReference>
<dbReference type="Pfam" id="PF07798">
    <property type="entry name" value="CCDC90-like"/>
    <property type="match status" value="1"/>
</dbReference>
<keyword id="KW-0175">Coiled coil</keyword>
<keyword id="KW-0472">Membrane</keyword>
<keyword id="KW-0496">Mitochondrion</keyword>
<keyword id="KW-1185">Reference proteome</keyword>
<keyword id="KW-0809">Transit peptide</keyword>
<keyword id="KW-0812">Transmembrane</keyword>
<keyword id="KW-1133">Transmembrane helix</keyword>
<evidence type="ECO:0000255" key="1"/>
<evidence type="ECO:0000256" key="2">
    <source>
        <dbReference type="SAM" id="MobiDB-lite"/>
    </source>
</evidence>
<evidence type="ECO:0000305" key="3"/>
<sequence length="314" mass="36574">MMRLIRTLPLRCFKTRIRRQGSLLCLRCFSSYSKPLLQKSMSLKNIQLSDLSSSPLSKNKEKQEKPEKENEGKHSIGLLDRFSEDFITQGNGLKPTTSQNQLDTIKFYQMLRERGNFSDEQCKIIIALLLQLLNDQFYSCYNDLFLRDMELNKQSHLFSSLETELKFAIQNSRDTQLNEHHLQLLKLKRELNSIHDELNEIIIDLLQKDAKLEFNNQKLENTLLYRQLNLKLNDCSNKIQTKILGDIRSHIENLRWQTTRSGLLVILVLVCSIMIGVSASKKERPGLQEPEEPEILAPKEDIDTTFPQDQHDID</sequence>
<proteinExistence type="evidence at protein level"/>
<comment type="subcellular location">
    <subcellularLocation>
        <location evidence="3">Mitochondrion membrane</location>
        <topology evidence="3">Single-pass membrane protein</topology>
    </subcellularLocation>
</comment>
<protein>
    <recommendedName>
        <fullName>Uncharacterized protein YLR283W, mitochondrial</fullName>
    </recommendedName>
</protein>